<organism>
    <name type="scientific">Cupriavidus metallidurans (strain ATCC 43123 / DSM 2839 / NBRC 102507 / CH34)</name>
    <name type="common">Ralstonia metallidurans</name>
    <dbReference type="NCBI Taxonomy" id="266264"/>
    <lineage>
        <taxon>Bacteria</taxon>
        <taxon>Pseudomonadati</taxon>
        <taxon>Pseudomonadota</taxon>
        <taxon>Betaproteobacteria</taxon>
        <taxon>Burkholderiales</taxon>
        <taxon>Burkholderiaceae</taxon>
        <taxon>Cupriavidus</taxon>
    </lineage>
</organism>
<feature type="chain" id="PRO_0000270361" description="Methionine import ATP-binding protein MetN">
    <location>
        <begin position="1"/>
        <end position="344"/>
    </location>
</feature>
<feature type="domain" description="ABC transporter" evidence="1">
    <location>
        <begin position="2"/>
        <end position="241"/>
    </location>
</feature>
<feature type="binding site" evidence="1">
    <location>
        <begin position="38"/>
        <end position="45"/>
    </location>
    <ligand>
        <name>ATP</name>
        <dbReference type="ChEBI" id="CHEBI:30616"/>
    </ligand>
</feature>
<reference key="1">
    <citation type="journal article" date="2010" name="PLoS ONE">
        <title>The complete genome sequence of Cupriavidus metallidurans strain CH34, a master survivalist in harsh and anthropogenic environments.</title>
        <authorList>
            <person name="Janssen P.J."/>
            <person name="Van Houdt R."/>
            <person name="Moors H."/>
            <person name="Monsieurs P."/>
            <person name="Morin N."/>
            <person name="Michaux A."/>
            <person name="Benotmane M.A."/>
            <person name="Leys N."/>
            <person name="Vallaeys T."/>
            <person name="Lapidus A."/>
            <person name="Monchy S."/>
            <person name="Medigue C."/>
            <person name="Taghavi S."/>
            <person name="McCorkle S."/>
            <person name="Dunn J."/>
            <person name="van der Lelie D."/>
            <person name="Mergeay M."/>
        </authorList>
    </citation>
    <scope>NUCLEOTIDE SEQUENCE [LARGE SCALE GENOMIC DNA]</scope>
    <source>
        <strain>ATCC 43123 / DSM 2839 / NBRC 102507 / CH34</strain>
    </source>
</reference>
<name>METN_CUPMC</name>
<evidence type="ECO:0000255" key="1">
    <source>
        <dbReference type="HAMAP-Rule" id="MF_01719"/>
    </source>
</evidence>
<sequence>MIELQGLSQRFPGGSGEVHALRDVSLSIASGEIFGIIGRSGAGKSTLVRAINLLNRPTSGRVIVAGQDLTALDKGALREARREIGMIFQHFNLLSSRTVYDNVALPLELAGKSKQEIASTVEPLLELVGLSKLRDRYPAQISGGQKQRVGIARALASKPKVLLSDEATSALDPETTRAILDLLKQINRELGLTIVMITHQMEVIKQVCDRVAVLEAGQVVESGRVIDVFLRPQHEVTRAMIGDVIAQELPVSVLKRVESRLGNGRDHVYRLAFTGENVDQPVLAQAIRQHGLDFNILHGHIDEIQGQAFGSLAIMATGELADVRAAMDYLQSQGVVVEEIEHVV</sequence>
<comment type="function">
    <text evidence="1">Part of the ABC transporter complex MetNIQ involved in methionine import. Responsible for energy coupling to the transport system.</text>
</comment>
<comment type="catalytic activity">
    <reaction evidence="1">
        <text>L-methionine(out) + ATP + H2O = L-methionine(in) + ADP + phosphate + H(+)</text>
        <dbReference type="Rhea" id="RHEA:29779"/>
        <dbReference type="ChEBI" id="CHEBI:15377"/>
        <dbReference type="ChEBI" id="CHEBI:15378"/>
        <dbReference type="ChEBI" id="CHEBI:30616"/>
        <dbReference type="ChEBI" id="CHEBI:43474"/>
        <dbReference type="ChEBI" id="CHEBI:57844"/>
        <dbReference type="ChEBI" id="CHEBI:456216"/>
        <dbReference type="EC" id="7.4.2.11"/>
    </reaction>
</comment>
<comment type="catalytic activity">
    <reaction evidence="1">
        <text>D-methionine(out) + ATP + H2O = D-methionine(in) + ADP + phosphate + H(+)</text>
        <dbReference type="Rhea" id="RHEA:29767"/>
        <dbReference type="ChEBI" id="CHEBI:15377"/>
        <dbReference type="ChEBI" id="CHEBI:15378"/>
        <dbReference type="ChEBI" id="CHEBI:30616"/>
        <dbReference type="ChEBI" id="CHEBI:43474"/>
        <dbReference type="ChEBI" id="CHEBI:57932"/>
        <dbReference type="ChEBI" id="CHEBI:456216"/>
        <dbReference type="EC" id="7.4.2.11"/>
    </reaction>
</comment>
<comment type="subunit">
    <text evidence="1">The complex is composed of two ATP-binding proteins (MetN), two transmembrane proteins (MetI) and a solute-binding protein (MetQ).</text>
</comment>
<comment type="subcellular location">
    <subcellularLocation>
        <location evidence="1">Cell inner membrane</location>
        <topology evidence="1">Peripheral membrane protein</topology>
    </subcellularLocation>
</comment>
<comment type="similarity">
    <text evidence="1">Belongs to the ABC transporter superfamily. Methionine importer (TC 3.A.1.24) family.</text>
</comment>
<proteinExistence type="inferred from homology"/>
<protein>
    <recommendedName>
        <fullName evidence="1">Methionine import ATP-binding protein MetN</fullName>
        <ecNumber evidence="1">7.4.2.11</ecNumber>
    </recommendedName>
</protein>
<gene>
    <name evidence="1" type="primary">metN</name>
    <name type="ordered locus">Rmet_0734</name>
</gene>
<keyword id="KW-0029">Amino-acid transport</keyword>
<keyword id="KW-0067">ATP-binding</keyword>
<keyword id="KW-0997">Cell inner membrane</keyword>
<keyword id="KW-1003">Cell membrane</keyword>
<keyword id="KW-0472">Membrane</keyword>
<keyword id="KW-0547">Nucleotide-binding</keyword>
<keyword id="KW-1185">Reference proteome</keyword>
<keyword id="KW-1278">Translocase</keyword>
<keyword id="KW-0813">Transport</keyword>
<dbReference type="EC" id="7.4.2.11" evidence="1"/>
<dbReference type="EMBL" id="CP000352">
    <property type="protein sequence ID" value="ABF07620.1"/>
    <property type="molecule type" value="Genomic_DNA"/>
</dbReference>
<dbReference type="RefSeq" id="WP_008643673.1">
    <property type="nucleotide sequence ID" value="NC_007973.1"/>
</dbReference>
<dbReference type="SMR" id="Q1LQF6"/>
<dbReference type="STRING" id="266264.Rmet_0734"/>
<dbReference type="KEGG" id="rme:Rmet_0734"/>
<dbReference type="eggNOG" id="COG1135">
    <property type="taxonomic scope" value="Bacteria"/>
</dbReference>
<dbReference type="HOGENOM" id="CLU_000604_1_3_4"/>
<dbReference type="Proteomes" id="UP000002429">
    <property type="component" value="Chromosome"/>
</dbReference>
<dbReference type="GO" id="GO:0005886">
    <property type="term" value="C:plasma membrane"/>
    <property type="evidence" value="ECO:0007669"/>
    <property type="project" value="UniProtKB-SubCell"/>
</dbReference>
<dbReference type="GO" id="GO:0033232">
    <property type="term" value="F:ABC-type D-methionine transporter activity"/>
    <property type="evidence" value="ECO:0007669"/>
    <property type="project" value="UniProtKB-EC"/>
</dbReference>
<dbReference type="GO" id="GO:0005524">
    <property type="term" value="F:ATP binding"/>
    <property type="evidence" value="ECO:0007669"/>
    <property type="project" value="UniProtKB-KW"/>
</dbReference>
<dbReference type="GO" id="GO:0016887">
    <property type="term" value="F:ATP hydrolysis activity"/>
    <property type="evidence" value="ECO:0007669"/>
    <property type="project" value="InterPro"/>
</dbReference>
<dbReference type="CDD" id="cd03258">
    <property type="entry name" value="ABC_MetN_methionine_transporter"/>
    <property type="match status" value="1"/>
</dbReference>
<dbReference type="FunFam" id="3.40.50.300:FF:000056">
    <property type="entry name" value="Cell division ATP-binding protein FtsE"/>
    <property type="match status" value="1"/>
</dbReference>
<dbReference type="Gene3D" id="3.30.70.260">
    <property type="match status" value="1"/>
</dbReference>
<dbReference type="Gene3D" id="3.40.50.300">
    <property type="entry name" value="P-loop containing nucleotide triphosphate hydrolases"/>
    <property type="match status" value="1"/>
</dbReference>
<dbReference type="InterPro" id="IPR003593">
    <property type="entry name" value="AAA+_ATPase"/>
</dbReference>
<dbReference type="InterPro" id="IPR003439">
    <property type="entry name" value="ABC_transporter-like_ATP-bd"/>
</dbReference>
<dbReference type="InterPro" id="IPR017871">
    <property type="entry name" value="ABC_transporter-like_CS"/>
</dbReference>
<dbReference type="InterPro" id="IPR045865">
    <property type="entry name" value="ACT-like_dom_sf"/>
</dbReference>
<dbReference type="InterPro" id="IPR041701">
    <property type="entry name" value="MetN_ABC"/>
</dbReference>
<dbReference type="InterPro" id="IPR050086">
    <property type="entry name" value="MetN_ABC_transporter-like"/>
</dbReference>
<dbReference type="InterPro" id="IPR018449">
    <property type="entry name" value="NIL_domain"/>
</dbReference>
<dbReference type="InterPro" id="IPR027417">
    <property type="entry name" value="P-loop_NTPase"/>
</dbReference>
<dbReference type="PANTHER" id="PTHR43166">
    <property type="entry name" value="AMINO ACID IMPORT ATP-BINDING PROTEIN"/>
    <property type="match status" value="1"/>
</dbReference>
<dbReference type="PANTHER" id="PTHR43166:SF30">
    <property type="entry name" value="METHIONINE IMPORT ATP-BINDING PROTEIN METN"/>
    <property type="match status" value="1"/>
</dbReference>
<dbReference type="Pfam" id="PF00005">
    <property type="entry name" value="ABC_tran"/>
    <property type="match status" value="1"/>
</dbReference>
<dbReference type="Pfam" id="PF09383">
    <property type="entry name" value="NIL"/>
    <property type="match status" value="1"/>
</dbReference>
<dbReference type="SMART" id="SM00382">
    <property type="entry name" value="AAA"/>
    <property type="match status" value="1"/>
</dbReference>
<dbReference type="SMART" id="SM00930">
    <property type="entry name" value="NIL"/>
    <property type="match status" value="1"/>
</dbReference>
<dbReference type="SUPFAM" id="SSF55021">
    <property type="entry name" value="ACT-like"/>
    <property type="match status" value="1"/>
</dbReference>
<dbReference type="SUPFAM" id="SSF52540">
    <property type="entry name" value="P-loop containing nucleoside triphosphate hydrolases"/>
    <property type="match status" value="1"/>
</dbReference>
<dbReference type="PROSITE" id="PS00211">
    <property type="entry name" value="ABC_TRANSPORTER_1"/>
    <property type="match status" value="1"/>
</dbReference>
<dbReference type="PROSITE" id="PS50893">
    <property type="entry name" value="ABC_TRANSPORTER_2"/>
    <property type="match status" value="1"/>
</dbReference>
<dbReference type="PROSITE" id="PS51264">
    <property type="entry name" value="METN"/>
    <property type="match status" value="1"/>
</dbReference>
<accession>Q1LQF6</accession>